<accession>P66546</accession>
<accession>Q9PAD8</accession>
<dbReference type="EMBL" id="AE003849">
    <property type="protein sequence ID" value="AAF85377.1"/>
    <property type="molecule type" value="Genomic_DNA"/>
</dbReference>
<dbReference type="PIR" id="C82539">
    <property type="entry name" value="C82539"/>
</dbReference>
<dbReference type="RefSeq" id="WP_004090321.1">
    <property type="nucleotide sequence ID" value="NC_002488.3"/>
</dbReference>
<dbReference type="SMR" id="P66546"/>
<dbReference type="STRING" id="160492.XF_2580"/>
<dbReference type="GeneID" id="93905822"/>
<dbReference type="KEGG" id="xfa:XF_2580"/>
<dbReference type="eggNOG" id="COG0052">
    <property type="taxonomic scope" value="Bacteria"/>
</dbReference>
<dbReference type="HOGENOM" id="CLU_040318_1_2_6"/>
<dbReference type="Proteomes" id="UP000000812">
    <property type="component" value="Chromosome"/>
</dbReference>
<dbReference type="GO" id="GO:0022627">
    <property type="term" value="C:cytosolic small ribosomal subunit"/>
    <property type="evidence" value="ECO:0007669"/>
    <property type="project" value="TreeGrafter"/>
</dbReference>
<dbReference type="GO" id="GO:0003735">
    <property type="term" value="F:structural constituent of ribosome"/>
    <property type="evidence" value="ECO:0007669"/>
    <property type="project" value="InterPro"/>
</dbReference>
<dbReference type="GO" id="GO:0006412">
    <property type="term" value="P:translation"/>
    <property type="evidence" value="ECO:0007669"/>
    <property type="project" value="UniProtKB-UniRule"/>
</dbReference>
<dbReference type="CDD" id="cd01425">
    <property type="entry name" value="RPS2"/>
    <property type="match status" value="1"/>
</dbReference>
<dbReference type="FunFam" id="1.10.287.610:FF:000001">
    <property type="entry name" value="30S ribosomal protein S2"/>
    <property type="match status" value="1"/>
</dbReference>
<dbReference type="Gene3D" id="3.40.50.10490">
    <property type="entry name" value="Glucose-6-phosphate isomerase like protein, domain 1"/>
    <property type="match status" value="1"/>
</dbReference>
<dbReference type="Gene3D" id="1.10.287.610">
    <property type="entry name" value="Helix hairpin bin"/>
    <property type="match status" value="1"/>
</dbReference>
<dbReference type="HAMAP" id="MF_00291_B">
    <property type="entry name" value="Ribosomal_uS2_B"/>
    <property type="match status" value="1"/>
</dbReference>
<dbReference type="InterPro" id="IPR001865">
    <property type="entry name" value="Ribosomal_uS2"/>
</dbReference>
<dbReference type="InterPro" id="IPR005706">
    <property type="entry name" value="Ribosomal_uS2_bac/mit/plastid"/>
</dbReference>
<dbReference type="InterPro" id="IPR018130">
    <property type="entry name" value="Ribosomal_uS2_CS"/>
</dbReference>
<dbReference type="InterPro" id="IPR023591">
    <property type="entry name" value="Ribosomal_uS2_flav_dom_sf"/>
</dbReference>
<dbReference type="NCBIfam" id="TIGR01011">
    <property type="entry name" value="rpsB_bact"/>
    <property type="match status" value="1"/>
</dbReference>
<dbReference type="PANTHER" id="PTHR12534">
    <property type="entry name" value="30S RIBOSOMAL PROTEIN S2 PROKARYOTIC AND ORGANELLAR"/>
    <property type="match status" value="1"/>
</dbReference>
<dbReference type="PANTHER" id="PTHR12534:SF0">
    <property type="entry name" value="SMALL RIBOSOMAL SUBUNIT PROTEIN US2M"/>
    <property type="match status" value="1"/>
</dbReference>
<dbReference type="Pfam" id="PF00318">
    <property type="entry name" value="Ribosomal_S2"/>
    <property type="match status" value="1"/>
</dbReference>
<dbReference type="PRINTS" id="PR00395">
    <property type="entry name" value="RIBOSOMALS2"/>
</dbReference>
<dbReference type="SUPFAM" id="SSF52313">
    <property type="entry name" value="Ribosomal protein S2"/>
    <property type="match status" value="1"/>
</dbReference>
<dbReference type="PROSITE" id="PS00962">
    <property type="entry name" value="RIBOSOMAL_S2_1"/>
    <property type="match status" value="1"/>
</dbReference>
<dbReference type="PROSITE" id="PS00963">
    <property type="entry name" value="RIBOSOMAL_S2_2"/>
    <property type="match status" value="1"/>
</dbReference>
<reference key="1">
    <citation type="journal article" date="2000" name="Nature">
        <title>The genome sequence of the plant pathogen Xylella fastidiosa.</title>
        <authorList>
            <person name="Simpson A.J.G."/>
            <person name="Reinach F.C."/>
            <person name="Arruda P."/>
            <person name="Abreu F.A."/>
            <person name="Acencio M."/>
            <person name="Alvarenga R."/>
            <person name="Alves L.M.C."/>
            <person name="Araya J.E."/>
            <person name="Baia G.S."/>
            <person name="Baptista C.S."/>
            <person name="Barros M.H."/>
            <person name="Bonaccorsi E.D."/>
            <person name="Bordin S."/>
            <person name="Bove J.M."/>
            <person name="Briones M.R.S."/>
            <person name="Bueno M.R.P."/>
            <person name="Camargo A.A."/>
            <person name="Camargo L.E.A."/>
            <person name="Carraro D.M."/>
            <person name="Carrer H."/>
            <person name="Colauto N.B."/>
            <person name="Colombo C."/>
            <person name="Costa F.F."/>
            <person name="Costa M.C.R."/>
            <person name="Costa-Neto C.M."/>
            <person name="Coutinho L.L."/>
            <person name="Cristofani M."/>
            <person name="Dias-Neto E."/>
            <person name="Docena C."/>
            <person name="El-Dorry H."/>
            <person name="Facincani A.P."/>
            <person name="Ferreira A.J.S."/>
            <person name="Ferreira V.C.A."/>
            <person name="Ferro J.A."/>
            <person name="Fraga J.S."/>
            <person name="Franca S.C."/>
            <person name="Franco M.C."/>
            <person name="Frohme M."/>
            <person name="Furlan L.R."/>
            <person name="Garnier M."/>
            <person name="Goldman G.H."/>
            <person name="Goldman M.H.S."/>
            <person name="Gomes S.L."/>
            <person name="Gruber A."/>
            <person name="Ho P.L."/>
            <person name="Hoheisel J.D."/>
            <person name="Junqueira M.L."/>
            <person name="Kemper E.L."/>
            <person name="Kitajima J.P."/>
            <person name="Krieger J.E."/>
            <person name="Kuramae E.E."/>
            <person name="Laigret F."/>
            <person name="Lambais M.R."/>
            <person name="Leite L.C.C."/>
            <person name="Lemos E.G.M."/>
            <person name="Lemos M.V.F."/>
            <person name="Lopes S.A."/>
            <person name="Lopes C.R."/>
            <person name="Machado J.A."/>
            <person name="Machado M.A."/>
            <person name="Madeira A.M.B.N."/>
            <person name="Madeira H.M.F."/>
            <person name="Marino C.L."/>
            <person name="Marques M.V."/>
            <person name="Martins E.A.L."/>
            <person name="Martins E.M.F."/>
            <person name="Matsukuma A.Y."/>
            <person name="Menck C.F.M."/>
            <person name="Miracca E.C."/>
            <person name="Miyaki C.Y."/>
            <person name="Monteiro-Vitorello C.B."/>
            <person name="Moon D.H."/>
            <person name="Nagai M.A."/>
            <person name="Nascimento A.L.T.O."/>
            <person name="Netto L.E.S."/>
            <person name="Nhani A. Jr."/>
            <person name="Nobrega F.G."/>
            <person name="Nunes L.R."/>
            <person name="Oliveira M.A."/>
            <person name="de Oliveira M.C."/>
            <person name="de Oliveira R.C."/>
            <person name="Palmieri D.A."/>
            <person name="Paris A."/>
            <person name="Peixoto B.R."/>
            <person name="Pereira G.A.G."/>
            <person name="Pereira H.A. Jr."/>
            <person name="Pesquero J.B."/>
            <person name="Quaggio R.B."/>
            <person name="Roberto P.G."/>
            <person name="Rodrigues V."/>
            <person name="de Rosa A.J.M."/>
            <person name="de Rosa V.E. Jr."/>
            <person name="de Sa R.G."/>
            <person name="Santelli R.V."/>
            <person name="Sawasaki H.E."/>
            <person name="da Silva A.C.R."/>
            <person name="da Silva A.M."/>
            <person name="da Silva F.R."/>
            <person name="Silva W.A. Jr."/>
            <person name="da Silveira J.F."/>
            <person name="Silvestri M.L.Z."/>
            <person name="Siqueira W.J."/>
            <person name="de Souza A.A."/>
            <person name="de Souza A.P."/>
            <person name="Terenzi M.F."/>
            <person name="Truffi D."/>
            <person name="Tsai S.M."/>
            <person name="Tsuhako M.H."/>
            <person name="Vallada H."/>
            <person name="Van Sluys M.A."/>
            <person name="Verjovski-Almeida S."/>
            <person name="Vettore A.L."/>
            <person name="Zago M.A."/>
            <person name="Zatz M."/>
            <person name="Meidanis J."/>
            <person name="Setubal J.C."/>
        </authorList>
    </citation>
    <scope>NUCLEOTIDE SEQUENCE [LARGE SCALE GENOMIC DNA]</scope>
    <source>
        <strain>9a5c</strain>
    </source>
</reference>
<keyword id="KW-0687">Ribonucleoprotein</keyword>
<keyword id="KW-0689">Ribosomal protein</keyword>
<comment type="similarity">
    <text evidence="1">Belongs to the universal ribosomal protein uS2 family.</text>
</comment>
<evidence type="ECO:0000255" key="1">
    <source>
        <dbReference type="HAMAP-Rule" id="MF_00291"/>
    </source>
</evidence>
<evidence type="ECO:0000256" key="2">
    <source>
        <dbReference type="SAM" id="MobiDB-lite"/>
    </source>
</evidence>
<evidence type="ECO:0000305" key="3"/>
<proteinExistence type="inferred from homology"/>
<gene>
    <name evidence="1" type="primary">rpsB</name>
    <name type="ordered locus">XF_2580</name>
</gene>
<organism>
    <name type="scientific">Xylella fastidiosa (strain 9a5c)</name>
    <dbReference type="NCBI Taxonomy" id="160492"/>
    <lineage>
        <taxon>Bacteria</taxon>
        <taxon>Pseudomonadati</taxon>
        <taxon>Pseudomonadota</taxon>
        <taxon>Gammaproteobacteria</taxon>
        <taxon>Lysobacterales</taxon>
        <taxon>Lysobacteraceae</taxon>
        <taxon>Xylella</taxon>
    </lineage>
</organism>
<sequence>MPQVTMRQMLEAGVHFGHQTRYRHPKMSPNIFGARGKIHIINLEKTVPLFNDAMNFLSAVAQKRGSVLFVGTKRSARDAIKEEAERCGMPYMIQRWLGGTLTNFRTVKQSVARLKELELAETDGTFSKLVKHEVLRLRRESGKLQASLGGIKDMNRIPDAIFVIDIGHEDIAIKEAKKLGIPVVAVVDTNYDPSLVDYPIPGNDDAIRAVQLYARAAADAVLEGKAAMPNAAAVREEEFASAPDAGKKGRQAQPKKGKRASDAAAE</sequence>
<feature type="chain" id="PRO_0000134280" description="Small ribosomal subunit protein uS2">
    <location>
        <begin position="1"/>
        <end position="266"/>
    </location>
</feature>
<feature type="region of interest" description="Disordered" evidence="2">
    <location>
        <begin position="233"/>
        <end position="266"/>
    </location>
</feature>
<feature type="compositionally biased region" description="Basic residues" evidence="2">
    <location>
        <begin position="248"/>
        <end position="258"/>
    </location>
</feature>
<name>RS2_XYLFA</name>
<protein>
    <recommendedName>
        <fullName evidence="1">Small ribosomal subunit protein uS2</fullName>
    </recommendedName>
    <alternativeName>
        <fullName evidence="3">30S ribosomal protein S2</fullName>
    </alternativeName>
</protein>